<reference key="1">
    <citation type="submission" date="2006-01" db="EMBL/GenBank/DDBJ databases">
        <title>Complete sequence of Novosphingobium aromaticivorans DSM 12444.</title>
        <authorList>
            <consortium name="US DOE Joint Genome Institute"/>
            <person name="Copeland A."/>
            <person name="Lucas S."/>
            <person name="Lapidus A."/>
            <person name="Barry K."/>
            <person name="Detter J.C."/>
            <person name="Glavina T."/>
            <person name="Hammon N."/>
            <person name="Israni S."/>
            <person name="Pitluck S."/>
            <person name="Chain P."/>
            <person name="Malfatti S."/>
            <person name="Shin M."/>
            <person name="Vergez L."/>
            <person name="Schmutz J."/>
            <person name="Larimer F."/>
            <person name="Land M."/>
            <person name="Kyrpides N."/>
            <person name="Ivanova N."/>
            <person name="Fredrickson J."/>
            <person name="Balkwill D."/>
            <person name="Romine M.F."/>
            <person name="Richardson P."/>
        </authorList>
    </citation>
    <scope>NUCLEOTIDE SEQUENCE [LARGE SCALE GENOMIC DNA]</scope>
    <source>
        <strain>ATCC 700278 / DSM 12444 / CCUG 56034 / CIP 105152 / NBRC 16084 / F199</strain>
    </source>
</reference>
<accession>Q2GBN7</accession>
<dbReference type="EMBL" id="CP000248">
    <property type="protein sequence ID" value="ABD24736.1"/>
    <property type="molecule type" value="Genomic_DNA"/>
</dbReference>
<dbReference type="RefSeq" id="WP_011443950.1">
    <property type="nucleotide sequence ID" value="NC_007794.1"/>
</dbReference>
<dbReference type="SMR" id="Q2GBN7"/>
<dbReference type="STRING" id="279238.Saro_0288"/>
<dbReference type="KEGG" id="nar:Saro_0288"/>
<dbReference type="eggNOG" id="COG0216">
    <property type="taxonomic scope" value="Bacteria"/>
</dbReference>
<dbReference type="HOGENOM" id="CLU_036856_0_1_5"/>
<dbReference type="Proteomes" id="UP000009134">
    <property type="component" value="Chromosome"/>
</dbReference>
<dbReference type="GO" id="GO:0005737">
    <property type="term" value="C:cytoplasm"/>
    <property type="evidence" value="ECO:0007669"/>
    <property type="project" value="UniProtKB-SubCell"/>
</dbReference>
<dbReference type="GO" id="GO:0016149">
    <property type="term" value="F:translation release factor activity, codon specific"/>
    <property type="evidence" value="ECO:0007669"/>
    <property type="project" value="UniProtKB-UniRule"/>
</dbReference>
<dbReference type="FunFam" id="3.30.160.20:FF:000004">
    <property type="entry name" value="Peptide chain release factor 1"/>
    <property type="match status" value="1"/>
</dbReference>
<dbReference type="FunFam" id="3.30.70.1660:FF:000002">
    <property type="entry name" value="Peptide chain release factor 1"/>
    <property type="match status" value="1"/>
</dbReference>
<dbReference type="FunFam" id="3.30.70.1660:FF:000004">
    <property type="entry name" value="Peptide chain release factor 1"/>
    <property type="match status" value="1"/>
</dbReference>
<dbReference type="Gene3D" id="3.30.160.20">
    <property type="match status" value="1"/>
</dbReference>
<dbReference type="Gene3D" id="3.30.70.1660">
    <property type="match status" value="1"/>
</dbReference>
<dbReference type="Gene3D" id="6.10.140.1950">
    <property type="match status" value="1"/>
</dbReference>
<dbReference type="HAMAP" id="MF_00093">
    <property type="entry name" value="Rel_fac_1"/>
    <property type="match status" value="1"/>
</dbReference>
<dbReference type="InterPro" id="IPR005139">
    <property type="entry name" value="PCRF"/>
</dbReference>
<dbReference type="InterPro" id="IPR000352">
    <property type="entry name" value="Pep_chain_release_fac_I"/>
</dbReference>
<dbReference type="InterPro" id="IPR045853">
    <property type="entry name" value="Pep_chain_release_fac_I_sf"/>
</dbReference>
<dbReference type="InterPro" id="IPR050057">
    <property type="entry name" value="Prokaryotic/Mito_RF"/>
</dbReference>
<dbReference type="InterPro" id="IPR004373">
    <property type="entry name" value="RF-1"/>
</dbReference>
<dbReference type="NCBIfam" id="TIGR00019">
    <property type="entry name" value="prfA"/>
    <property type="match status" value="1"/>
</dbReference>
<dbReference type="NCBIfam" id="NF001859">
    <property type="entry name" value="PRK00591.1"/>
    <property type="match status" value="1"/>
</dbReference>
<dbReference type="PANTHER" id="PTHR43804">
    <property type="entry name" value="LD18447P"/>
    <property type="match status" value="1"/>
</dbReference>
<dbReference type="PANTHER" id="PTHR43804:SF7">
    <property type="entry name" value="LD18447P"/>
    <property type="match status" value="1"/>
</dbReference>
<dbReference type="Pfam" id="PF03462">
    <property type="entry name" value="PCRF"/>
    <property type="match status" value="1"/>
</dbReference>
<dbReference type="Pfam" id="PF00472">
    <property type="entry name" value="RF-1"/>
    <property type="match status" value="1"/>
</dbReference>
<dbReference type="SMART" id="SM00937">
    <property type="entry name" value="PCRF"/>
    <property type="match status" value="1"/>
</dbReference>
<dbReference type="SUPFAM" id="SSF75620">
    <property type="entry name" value="Release factor"/>
    <property type="match status" value="1"/>
</dbReference>
<dbReference type="PROSITE" id="PS00745">
    <property type="entry name" value="RF_PROK_I"/>
    <property type="match status" value="1"/>
</dbReference>
<protein>
    <recommendedName>
        <fullName evidence="1">Peptide chain release factor 1</fullName>
        <shortName evidence="1">RF-1</shortName>
    </recommendedName>
</protein>
<organism>
    <name type="scientific">Novosphingobium aromaticivorans (strain ATCC 700278 / DSM 12444 / CCUG 56034 / CIP 105152 / NBRC 16084 / F199)</name>
    <dbReference type="NCBI Taxonomy" id="279238"/>
    <lineage>
        <taxon>Bacteria</taxon>
        <taxon>Pseudomonadati</taxon>
        <taxon>Pseudomonadota</taxon>
        <taxon>Alphaproteobacteria</taxon>
        <taxon>Sphingomonadales</taxon>
        <taxon>Sphingomonadaceae</taxon>
        <taxon>Novosphingobium</taxon>
    </lineage>
</organism>
<name>RF1_NOVAD</name>
<gene>
    <name evidence="1" type="primary">prfA</name>
    <name type="ordered locus">Saro_0288</name>
</gene>
<proteinExistence type="inferred from homology"/>
<comment type="function">
    <text evidence="1">Peptide chain release factor 1 directs the termination of translation in response to the peptide chain termination codons UAG and UAA.</text>
</comment>
<comment type="subcellular location">
    <subcellularLocation>
        <location evidence="1">Cytoplasm</location>
    </subcellularLocation>
</comment>
<comment type="PTM">
    <text evidence="1">Methylated by PrmC. Methylation increases the termination efficiency of RF1.</text>
</comment>
<comment type="similarity">
    <text evidence="1">Belongs to the prokaryotic/mitochondrial release factor family.</text>
</comment>
<evidence type="ECO:0000255" key="1">
    <source>
        <dbReference type="HAMAP-Rule" id="MF_00093"/>
    </source>
</evidence>
<feature type="chain" id="PRO_0000263309" description="Peptide chain release factor 1">
    <location>
        <begin position="1"/>
        <end position="354"/>
    </location>
</feature>
<feature type="modified residue" description="N5-methylglutamine" evidence="1">
    <location>
        <position position="230"/>
    </location>
</feature>
<sequence length="354" mass="38634">MSVSDARLAQIAARFAELEARLASGTLEGADFIAASRDYAELEPVARVAEEVREMRGELVSLAALDDPDMRELADEELARIRAELPEAEHRLAVAMLPRDSADARPAMLEIRAGTGGDEAALFAADLFRMYERYAAEQGWRVETISVNANDLGGYKEVVANVAGQGVFAKLKFESGVHRVQRVPVTESGGRIHTSAATVAVLPEPDEVDVAIEDKDLKIDIYRASGAGGQHVNTTDSAVRITHLPSGLVVTCQDERSQHKNKAKAMQVLRTRLYDMRREAAQGAEAEARKAMVGSGDRSERIRTYNFPQGRVTDHRINLTLHRLPEILEGPGLAELIDALIAEDQSKRLAAMDG</sequence>
<keyword id="KW-0963">Cytoplasm</keyword>
<keyword id="KW-0488">Methylation</keyword>
<keyword id="KW-0648">Protein biosynthesis</keyword>
<keyword id="KW-1185">Reference proteome</keyword>